<reference key="1">
    <citation type="journal article" date="1997" name="J. Plant Res.">
        <title>Analysis of a plastid gene cluster reveals a close relationship between Cyanidioschyzon and Cyanidium.</title>
        <authorList>
            <person name="Ohta N."/>
            <person name="Sato N."/>
            <person name="Ueda K."/>
            <person name="Kuroiwa T."/>
        </authorList>
    </citation>
    <scope>NUCLEOTIDE SEQUENCE [GENOMIC DNA]</scope>
</reference>
<reference key="2">
    <citation type="journal article" date="2003" name="DNA Res.">
        <title>Complete sequence and analysis of the plastid genome of the unicellular red alga Cyanidioschyzon merolae.</title>
        <authorList>
            <person name="Ohta N."/>
            <person name="Matsuzaki M."/>
            <person name="Misumi O."/>
            <person name="Miyagishima S.-Y."/>
            <person name="Nozaki H."/>
            <person name="Tanaka K."/>
            <person name="Shin-i T."/>
            <person name="Kohara Y."/>
            <person name="Kuroiwa T."/>
        </authorList>
    </citation>
    <scope>NUCLEOTIDE SEQUENCE [LARGE SCALE GENOMIC DNA]</scope>
    <source>
        <strain>NIES-3377 / 10D</strain>
    </source>
</reference>
<feature type="chain" id="PRO_0000132563" description="Small ribosomal subunit protein uS4c">
    <location>
        <begin position="1"/>
        <end position="190"/>
    </location>
</feature>
<feature type="domain" description="S4 RNA-binding">
    <location>
        <begin position="92"/>
        <end position="152"/>
    </location>
</feature>
<feature type="sequence conflict" description="In Ref. 1; BAA22816." evidence="2" ref="1">
    <original>R</original>
    <variation>RR</variation>
    <location>
        <position position="14"/>
    </location>
</feature>
<feature type="sequence conflict" description="In Ref. 1." evidence="2" ref="1">
    <original>V</original>
    <variation>G</variation>
    <location>
        <position position="49"/>
    </location>
</feature>
<feature type="sequence conflict" description="In Ref. 1." evidence="2" ref="1">
    <original>E</original>
    <variation>G</variation>
    <location>
        <position position="53"/>
    </location>
</feature>
<comment type="function">
    <text evidence="1">One of the primary rRNA binding proteins, it binds directly to 16S rRNA where it nucleates assembly of the body of the 30S subunit.</text>
</comment>
<comment type="function">
    <text evidence="1">With S5 and S12 plays an important role in translational accuracy.</text>
</comment>
<comment type="subunit">
    <text evidence="1">Part of the 30S ribosomal subunit. Contacts protein S5. The interaction surface between S4 and S5 is involved in control of translational fidelity (By similarity).</text>
</comment>
<comment type="subcellular location">
    <subcellularLocation>
        <location>Plastid</location>
        <location>Chloroplast</location>
    </subcellularLocation>
</comment>
<comment type="similarity">
    <text evidence="2">Belongs to the universal ribosomal protein uS4 family.</text>
</comment>
<sequence length="190" mass="21574">MSRYLGPRVRIIRRLGILPAFTNKSPNKRTGVPGEHAHKTRKLSEYAGVLQGEQKLQYYYGITNNQLARYFRQAKKSRASTGIELLKMLETRLDHVVYRAGFAPTLPAARQLVNHGHVKVNGNQVTIASFACQVNHIIEVKAKSPSSAQLPPYLQVENQFVKMIQPVEKDWLAFRVNELLVVEYYTRVGA</sequence>
<geneLocation type="chloroplast"/>
<gene>
    <name type="primary">rps4</name>
</gene>
<dbReference type="EMBL" id="D63675">
    <property type="protein sequence ID" value="BAA22816.1"/>
    <property type="molecule type" value="Genomic_DNA"/>
</dbReference>
<dbReference type="EMBL" id="AB002583">
    <property type="protein sequence ID" value="BAC76103.1"/>
    <property type="molecule type" value="Genomic_DNA"/>
</dbReference>
<dbReference type="RefSeq" id="NP_848941.1">
    <property type="nucleotide sequence ID" value="NC_004799.1"/>
</dbReference>
<dbReference type="SMR" id="O22020"/>
<dbReference type="STRING" id="280699.O22020"/>
<dbReference type="GeneID" id="845011"/>
<dbReference type="KEGG" id="cme:CymeCp009"/>
<dbReference type="eggNOG" id="KOG3301">
    <property type="taxonomic scope" value="Eukaryota"/>
</dbReference>
<dbReference type="HOGENOM" id="CLU_092403_0_1_1"/>
<dbReference type="Proteomes" id="UP000007014">
    <property type="component" value="Chloroplast"/>
</dbReference>
<dbReference type="GO" id="GO:0009507">
    <property type="term" value="C:chloroplast"/>
    <property type="evidence" value="ECO:0007669"/>
    <property type="project" value="UniProtKB-SubCell"/>
</dbReference>
<dbReference type="GO" id="GO:0015935">
    <property type="term" value="C:small ribosomal subunit"/>
    <property type="evidence" value="ECO:0007669"/>
    <property type="project" value="InterPro"/>
</dbReference>
<dbReference type="GO" id="GO:0019843">
    <property type="term" value="F:rRNA binding"/>
    <property type="evidence" value="ECO:0007669"/>
    <property type="project" value="UniProtKB-UniRule"/>
</dbReference>
<dbReference type="GO" id="GO:0003735">
    <property type="term" value="F:structural constituent of ribosome"/>
    <property type="evidence" value="ECO:0007669"/>
    <property type="project" value="InterPro"/>
</dbReference>
<dbReference type="GO" id="GO:0042274">
    <property type="term" value="P:ribosomal small subunit biogenesis"/>
    <property type="evidence" value="ECO:0007669"/>
    <property type="project" value="TreeGrafter"/>
</dbReference>
<dbReference type="GO" id="GO:0006412">
    <property type="term" value="P:translation"/>
    <property type="evidence" value="ECO:0007669"/>
    <property type="project" value="UniProtKB-UniRule"/>
</dbReference>
<dbReference type="CDD" id="cd00165">
    <property type="entry name" value="S4"/>
    <property type="match status" value="1"/>
</dbReference>
<dbReference type="FunFam" id="3.10.290.10:FF:000001">
    <property type="entry name" value="30S ribosomal protein S4"/>
    <property type="match status" value="1"/>
</dbReference>
<dbReference type="Gene3D" id="1.10.1050.10">
    <property type="entry name" value="Ribosomal Protein S4 Delta 41, Chain A, domain 1"/>
    <property type="match status" value="1"/>
</dbReference>
<dbReference type="Gene3D" id="3.10.290.10">
    <property type="entry name" value="RNA-binding S4 domain"/>
    <property type="match status" value="1"/>
</dbReference>
<dbReference type="HAMAP" id="MF_01306_B">
    <property type="entry name" value="Ribosomal_uS4_B"/>
    <property type="match status" value="1"/>
</dbReference>
<dbReference type="InterPro" id="IPR022801">
    <property type="entry name" value="Ribosomal_uS4"/>
</dbReference>
<dbReference type="InterPro" id="IPR005709">
    <property type="entry name" value="Ribosomal_uS4_bac-type"/>
</dbReference>
<dbReference type="InterPro" id="IPR018079">
    <property type="entry name" value="Ribosomal_uS4_CS"/>
</dbReference>
<dbReference type="InterPro" id="IPR001912">
    <property type="entry name" value="Ribosomal_uS4_N"/>
</dbReference>
<dbReference type="InterPro" id="IPR002942">
    <property type="entry name" value="S4_RNA-bd"/>
</dbReference>
<dbReference type="InterPro" id="IPR036986">
    <property type="entry name" value="S4_RNA-bd_sf"/>
</dbReference>
<dbReference type="NCBIfam" id="NF003717">
    <property type="entry name" value="PRK05327.1"/>
    <property type="match status" value="1"/>
</dbReference>
<dbReference type="NCBIfam" id="TIGR01017">
    <property type="entry name" value="rpsD_bact"/>
    <property type="match status" value="1"/>
</dbReference>
<dbReference type="PANTHER" id="PTHR11831">
    <property type="entry name" value="30S 40S RIBOSOMAL PROTEIN"/>
    <property type="match status" value="1"/>
</dbReference>
<dbReference type="PANTHER" id="PTHR11831:SF4">
    <property type="entry name" value="SMALL RIBOSOMAL SUBUNIT PROTEIN US4M"/>
    <property type="match status" value="1"/>
</dbReference>
<dbReference type="Pfam" id="PF00163">
    <property type="entry name" value="Ribosomal_S4"/>
    <property type="match status" value="1"/>
</dbReference>
<dbReference type="Pfam" id="PF01479">
    <property type="entry name" value="S4"/>
    <property type="match status" value="1"/>
</dbReference>
<dbReference type="SMART" id="SM01390">
    <property type="entry name" value="Ribosomal_S4"/>
    <property type="match status" value="1"/>
</dbReference>
<dbReference type="SMART" id="SM00363">
    <property type="entry name" value="S4"/>
    <property type="match status" value="1"/>
</dbReference>
<dbReference type="SUPFAM" id="SSF55174">
    <property type="entry name" value="Alpha-L RNA-binding motif"/>
    <property type="match status" value="1"/>
</dbReference>
<dbReference type="PROSITE" id="PS00632">
    <property type="entry name" value="RIBOSOMAL_S4"/>
    <property type="match status" value="1"/>
</dbReference>
<dbReference type="PROSITE" id="PS50889">
    <property type="entry name" value="S4"/>
    <property type="match status" value="1"/>
</dbReference>
<keyword id="KW-0150">Chloroplast</keyword>
<keyword id="KW-0934">Plastid</keyword>
<keyword id="KW-1185">Reference proteome</keyword>
<keyword id="KW-0687">Ribonucleoprotein</keyword>
<keyword id="KW-0689">Ribosomal protein</keyword>
<keyword id="KW-0694">RNA-binding</keyword>
<keyword id="KW-0699">rRNA-binding</keyword>
<protein>
    <recommendedName>
        <fullName evidence="2">Small ribosomal subunit protein uS4c</fullName>
    </recommendedName>
    <alternativeName>
        <fullName>30S ribosomal protein S4, chloroplastic</fullName>
    </alternativeName>
</protein>
<organism>
    <name type="scientific">Cyanidioschyzon merolae (strain NIES-3377 / 10D)</name>
    <name type="common">Unicellular red alga</name>
    <dbReference type="NCBI Taxonomy" id="280699"/>
    <lineage>
        <taxon>Eukaryota</taxon>
        <taxon>Rhodophyta</taxon>
        <taxon>Bangiophyceae</taxon>
        <taxon>Cyanidiales</taxon>
        <taxon>Cyanidiaceae</taxon>
        <taxon>Cyanidioschyzon</taxon>
    </lineage>
</organism>
<evidence type="ECO:0000250" key="1"/>
<evidence type="ECO:0000305" key="2"/>
<proteinExistence type="inferred from homology"/>
<name>RR4_CYAM1</name>
<accession>O22020</accession>